<name>RS4_EXIS2</name>
<comment type="function">
    <text evidence="1">One of the primary rRNA binding proteins, it binds directly to 16S rRNA where it nucleates assembly of the body of the 30S subunit.</text>
</comment>
<comment type="function">
    <text evidence="1">With S5 and S12 plays an important role in translational accuracy.</text>
</comment>
<comment type="subunit">
    <text evidence="1">Part of the 30S ribosomal subunit. Contacts protein S5. The interaction surface between S4 and S5 is involved in control of translational fidelity.</text>
</comment>
<comment type="similarity">
    <text evidence="1">Belongs to the universal ribosomal protein uS4 family.</text>
</comment>
<proteinExistence type="inferred from homology"/>
<gene>
    <name evidence="1" type="primary">rpsD</name>
    <name type="ordered locus">Exig_2233</name>
</gene>
<dbReference type="EMBL" id="CP001022">
    <property type="protein sequence ID" value="ACB61685.1"/>
    <property type="molecule type" value="Genomic_DNA"/>
</dbReference>
<dbReference type="RefSeq" id="WP_012371102.1">
    <property type="nucleotide sequence ID" value="NC_010556.1"/>
</dbReference>
<dbReference type="SMR" id="B1YKD2"/>
<dbReference type="STRING" id="262543.Exig_2233"/>
<dbReference type="KEGG" id="esi:Exig_2233"/>
<dbReference type="eggNOG" id="COG0522">
    <property type="taxonomic scope" value="Bacteria"/>
</dbReference>
<dbReference type="HOGENOM" id="CLU_092403_0_1_9"/>
<dbReference type="OrthoDB" id="9803672at2"/>
<dbReference type="Proteomes" id="UP000001681">
    <property type="component" value="Chromosome"/>
</dbReference>
<dbReference type="GO" id="GO:0015935">
    <property type="term" value="C:small ribosomal subunit"/>
    <property type="evidence" value="ECO:0007669"/>
    <property type="project" value="InterPro"/>
</dbReference>
<dbReference type="GO" id="GO:0019843">
    <property type="term" value="F:rRNA binding"/>
    <property type="evidence" value="ECO:0007669"/>
    <property type="project" value="UniProtKB-UniRule"/>
</dbReference>
<dbReference type="GO" id="GO:0003735">
    <property type="term" value="F:structural constituent of ribosome"/>
    <property type="evidence" value="ECO:0007669"/>
    <property type="project" value="InterPro"/>
</dbReference>
<dbReference type="GO" id="GO:0042274">
    <property type="term" value="P:ribosomal small subunit biogenesis"/>
    <property type="evidence" value="ECO:0007669"/>
    <property type="project" value="TreeGrafter"/>
</dbReference>
<dbReference type="GO" id="GO:0006412">
    <property type="term" value="P:translation"/>
    <property type="evidence" value="ECO:0007669"/>
    <property type="project" value="UniProtKB-UniRule"/>
</dbReference>
<dbReference type="CDD" id="cd00165">
    <property type="entry name" value="S4"/>
    <property type="match status" value="1"/>
</dbReference>
<dbReference type="FunFam" id="1.10.1050.10:FF:000001">
    <property type="entry name" value="30S ribosomal protein S4"/>
    <property type="match status" value="1"/>
</dbReference>
<dbReference type="FunFam" id="3.10.290.10:FF:000001">
    <property type="entry name" value="30S ribosomal protein S4"/>
    <property type="match status" value="1"/>
</dbReference>
<dbReference type="Gene3D" id="1.10.1050.10">
    <property type="entry name" value="Ribosomal Protein S4 Delta 41, Chain A, domain 1"/>
    <property type="match status" value="1"/>
</dbReference>
<dbReference type="Gene3D" id="3.10.290.10">
    <property type="entry name" value="RNA-binding S4 domain"/>
    <property type="match status" value="1"/>
</dbReference>
<dbReference type="HAMAP" id="MF_01306_B">
    <property type="entry name" value="Ribosomal_uS4_B"/>
    <property type="match status" value="1"/>
</dbReference>
<dbReference type="InterPro" id="IPR022801">
    <property type="entry name" value="Ribosomal_uS4"/>
</dbReference>
<dbReference type="InterPro" id="IPR005709">
    <property type="entry name" value="Ribosomal_uS4_bac-type"/>
</dbReference>
<dbReference type="InterPro" id="IPR018079">
    <property type="entry name" value="Ribosomal_uS4_CS"/>
</dbReference>
<dbReference type="InterPro" id="IPR001912">
    <property type="entry name" value="Ribosomal_uS4_N"/>
</dbReference>
<dbReference type="InterPro" id="IPR002942">
    <property type="entry name" value="S4_RNA-bd"/>
</dbReference>
<dbReference type="InterPro" id="IPR036986">
    <property type="entry name" value="S4_RNA-bd_sf"/>
</dbReference>
<dbReference type="NCBIfam" id="NF003717">
    <property type="entry name" value="PRK05327.1"/>
    <property type="match status" value="1"/>
</dbReference>
<dbReference type="NCBIfam" id="TIGR01017">
    <property type="entry name" value="rpsD_bact"/>
    <property type="match status" value="1"/>
</dbReference>
<dbReference type="PANTHER" id="PTHR11831">
    <property type="entry name" value="30S 40S RIBOSOMAL PROTEIN"/>
    <property type="match status" value="1"/>
</dbReference>
<dbReference type="PANTHER" id="PTHR11831:SF4">
    <property type="entry name" value="SMALL RIBOSOMAL SUBUNIT PROTEIN US4M"/>
    <property type="match status" value="1"/>
</dbReference>
<dbReference type="Pfam" id="PF00163">
    <property type="entry name" value="Ribosomal_S4"/>
    <property type="match status" value="1"/>
</dbReference>
<dbReference type="Pfam" id="PF01479">
    <property type="entry name" value="S4"/>
    <property type="match status" value="1"/>
</dbReference>
<dbReference type="SMART" id="SM01390">
    <property type="entry name" value="Ribosomal_S4"/>
    <property type="match status" value="1"/>
</dbReference>
<dbReference type="SMART" id="SM00363">
    <property type="entry name" value="S4"/>
    <property type="match status" value="1"/>
</dbReference>
<dbReference type="SUPFAM" id="SSF55174">
    <property type="entry name" value="Alpha-L RNA-binding motif"/>
    <property type="match status" value="1"/>
</dbReference>
<dbReference type="PROSITE" id="PS00632">
    <property type="entry name" value="RIBOSOMAL_S4"/>
    <property type="match status" value="1"/>
</dbReference>
<dbReference type="PROSITE" id="PS50889">
    <property type="entry name" value="S4"/>
    <property type="match status" value="1"/>
</dbReference>
<reference key="1">
    <citation type="submission" date="2008-04" db="EMBL/GenBank/DDBJ databases">
        <title>Complete sequence of chromosome of Exiguobacterium sibiricum 255-15.</title>
        <authorList>
            <consortium name="US DOE Joint Genome Institute"/>
            <person name="Copeland A."/>
            <person name="Lucas S."/>
            <person name="Lapidus A."/>
            <person name="Glavina del Rio T."/>
            <person name="Dalin E."/>
            <person name="Tice H."/>
            <person name="Bruce D."/>
            <person name="Goodwin L."/>
            <person name="Pitluck S."/>
            <person name="Kiss H."/>
            <person name="Chertkov O."/>
            <person name="Monk C."/>
            <person name="Brettin T."/>
            <person name="Detter J.C."/>
            <person name="Han C."/>
            <person name="Kuske C.R."/>
            <person name="Schmutz J."/>
            <person name="Larimer F."/>
            <person name="Land M."/>
            <person name="Hauser L."/>
            <person name="Kyrpides N."/>
            <person name="Mikhailova N."/>
            <person name="Vishnivetskaya T."/>
            <person name="Rodrigues D.F."/>
            <person name="Gilichinsky D."/>
            <person name="Tiedje J."/>
            <person name="Richardson P."/>
        </authorList>
    </citation>
    <scope>NUCLEOTIDE SEQUENCE [LARGE SCALE GENOMIC DNA]</scope>
    <source>
        <strain>DSM 17290 / CCUG 55495 / CIP 109462 / JCM 13490 / 255-15</strain>
    </source>
</reference>
<feature type="chain" id="PRO_1000140735" description="Small ribosomal subunit protein uS4">
    <location>
        <begin position="1"/>
        <end position="199"/>
    </location>
</feature>
<feature type="domain" description="S4 RNA-binding" evidence="1">
    <location>
        <begin position="91"/>
        <end position="153"/>
    </location>
</feature>
<keyword id="KW-1185">Reference proteome</keyword>
<keyword id="KW-0687">Ribonucleoprotein</keyword>
<keyword id="KW-0689">Ribosomal protein</keyword>
<keyword id="KW-0694">RNA-binding</keyword>
<keyword id="KW-0699">rRNA-binding</keyword>
<organism>
    <name type="scientific">Exiguobacterium sibiricum (strain DSM 17290 / CCUG 55495 / CIP 109462 / JCM 13490 / 255-15)</name>
    <dbReference type="NCBI Taxonomy" id="262543"/>
    <lineage>
        <taxon>Bacteria</taxon>
        <taxon>Bacillati</taxon>
        <taxon>Bacillota</taxon>
        <taxon>Bacilli</taxon>
        <taxon>Bacillales</taxon>
        <taxon>Bacillales Family XII. Incertae Sedis</taxon>
        <taxon>Exiguobacterium</taxon>
    </lineage>
</organism>
<evidence type="ECO:0000255" key="1">
    <source>
        <dbReference type="HAMAP-Rule" id="MF_01306"/>
    </source>
</evidence>
<evidence type="ECO:0000305" key="2"/>
<sequence length="199" mass="22867">MARYTGPAWKLSRRLGISLTETGKEIAKRPYAPGQHGNSRRKMSEYGLQLQAKQTLRHMYGVNERQFNRIFNDAGKMPGIHGENFMFLLEARLDNVVYRMGMARTRRAARQLVNHGHIQVDGARVDIPSFRVKPGQTISVREKSKNFVVIKEALEVAPATKDFVTFDAEKLEGTFVRLPERSELNDQIQEQLVVEYYSR</sequence>
<accession>B1YKD2</accession>
<protein>
    <recommendedName>
        <fullName evidence="1">Small ribosomal subunit protein uS4</fullName>
    </recommendedName>
    <alternativeName>
        <fullName evidence="2">30S ribosomal protein S4</fullName>
    </alternativeName>
</protein>